<reference key="1">
    <citation type="journal article" date="2002" name="Proc. Natl. Acad. Sci. U.S.A.">
        <title>Complete genome sequence of Clostridium perfringens, an anaerobic flesh-eater.</title>
        <authorList>
            <person name="Shimizu T."/>
            <person name="Ohtani K."/>
            <person name="Hirakawa H."/>
            <person name="Ohshima K."/>
            <person name="Yamashita A."/>
            <person name="Shiba T."/>
            <person name="Ogasawara N."/>
            <person name="Hattori M."/>
            <person name="Kuhara S."/>
            <person name="Hayashi H."/>
        </authorList>
    </citation>
    <scope>NUCLEOTIDE SEQUENCE [LARGE SCALE GENOMIC DNA]</scope>
    <source>
        <strain>13 / Type A</strain>
    </source>
</reference>
<comment type="similarity">
    <text evidence="2">Belongs to the UPF0758 family.</text>
</comment>
<keyword id="KW-0378">Hydrolase</keyword>
<keyword id="KW-0479">Metal-binding</keyword>
<keyword id="KW-0482">Metalloprotease</keyword>
<keyword id="KW-0645">Protease</keyword>
<keyword id="KW-1185">Reference proteome</keyword>
<keyword id="KW-0862">Zinc</keyword>
<organism>
    <name type="scientific">Clostridium perfringens (strain 13 / Type A)</name>
    <dbReference type="NCBI Taxonomy" id="195102"/>
    <lineage>
        <taxon>Bacteria</taxon>
        <taxon>Bacillati</taxon>
        <taxon>Bacillota</taxon>
        <taxon>Clostridia</taxon>
        <taxon>Eubacteriales</taxon>
        <taxon>Clostridiaceae</taxon>
        <taxon>Clostridium</taxon>
    </lineage>
</organism>
<gene>
    <name type="ordered locus">CPE2144</name>
</gene>
<proteinExistence type="inferred from homology"/>
<sequence>MSKNIRINEIPSGERPREKLLFYGAQFLSNEELLAIILRTGNKDSNVVELSYRIIHSVGGLNGLFKASAKELMEVKGVKEAKATQILAMCELYKRFKVSELTQVKISKPSDVAKLVLDELRMLRQEVLILINLDTKNKVISKKEIFKGGLNSSLVHPREIFREAVKDSAASIIICHNHPSGDPTPSRDDINITTRLKECGKMMGIELLDHLIIGDNRFISLKEKDIL</sequence>
<name>Y2144_CLOPE</name>
<evidence type="ECO:0000255" key="1">
    <source>
        <dbReference type="PROSITE-ProRule" id="PRU01182"/>
    </source>
</evidence>
<evidence type="ECO:0000305" key="2"/>
<dbReference type="EMBL" id="BA000016">
    <property type="protein sequence ID" value="BAB81850.1"/>
    <property type="molecule type" value="Genomic_DNA"/>
</dbReference>
<dbReference type="SMR" id="Q8XIH5"/>
<dbReference type="STRING" id="195102.gene:10491414"/>
<dbReference type="KEGG" id="cpe:CPE2144"/>
<dbReference type="HOGENOM" id="CLU_073529_0_2_9"/>
<dbReference type="Proteomes" id="UP000000818">
    <property type="component" value="Chromosome"/>
</dbReference>
<dbReference type="GO" id="GO:0046872">
    <property type="term" value="F:metal ion binding"/>
    <property type="evidence" value="ECO:0007669"/>
    <property type="project" value="UniProtKB-KW"/>
</dbReference>
<dbReference type="GO" id="GO:0008237">
    <property type="term" value="F:metallopeptidase activity"/>
    <property type="evidence" value="ECO:0007669"/>
    <property type="project" value="UniProtKB-KW"/>
</dbReference>
<dbReference type="GO" id="GO:0006508">
    <property type="term" value="P:proteolysis"/>
    <property type="evidence" value="ECO:0007669"/>
    <property type="project" value="UniProtKB-KW"/>
</dbReference>
<dbReference type="CDD" id="cd08071">
    <property type="entry name" value="MPN_DUF2466"/>
    <property type="match status" value="1"/>
</dbReference>
<dbReference type="Gene3D" id="3.40.140.10">
    <property type="entry name" value="Cytidine Deaminase, domain 2"/>
    <property type="match status" value="1"/>
</dbReference>
<dbReference type="InterPro" id="IPR037518">
    <property type="entry name" value="MPN"/>
</dbReference>
<dbReference type="InterPro" id="IPR025657">
    <property type="entry name" value="RadC_JAB"/>
</dbReference>
<dbReference type="InterPro" id="IPR010994">
    <property type="entry name" value="RuvA_2-like"/>
</dbReference>
<dbReference type="InterPro" id="IPR001405">
    <property type="entry name" value="UPF0758"/>
</dbReference>
<dbReference type="InterPro" id="IPR020891">
    <property type="entry name" value="UPF0758_CS"/>
</dbReference>
<dbReference type="InterPro" id="IPR046778">
    <property type="entry name" value="UPF0758_N"/>
</dbReference>
<dbReference type="NCBIfam" id="NF000642">
    <property type="entry name" value="PRK00024.1"/>
    <property type="match status" value="1"/>
</dbReference>
<dbReference type="NCBIfam" id="TIGR00608">
    <property type="entry name" value="radc"/>
    <property type="match status" value="1"/>
</dbReference>
<dbReference type="PANTHER" id="PTHR30471">
    <property type="entry name" value="DNA REPAIR PROTEIN RADC"/>
    <property type="match status" value="1"/>
</dbReference>
<dbReference type="PANTHER" id="PTHR30471:SF3">
    <property type="entry name" value="UPF0758 PROTEIN YEES-RELATED"/>
    <property type="match status" value="1"/>
</dbReference>
<dbReference type="Pfam" id="PF04002">
    <property type="entry name" value="RadC"/>
    <property type="match status" value="1"/>
</dbReference>
<dbReference type="Pfam" id="PF20582">
    <property type="entry name" value="UPF0758_N"/>
    <property type="match status" value="1"/>
</dbReference>
<dbReference type="SUPFAM" id="SSF47781">
    <property type="entry name" value="RuvA domain 2-like"/>
    <property type="match status" value="1"/>
</dbReference>
<dbReference type="PROSITE" id="PS50249">
    <property type="entry name" value="MPN"/>
    <property type="match status" value="1"/>
</dbReference>
<dbReference type="PROSITE" id="PS01302">
    <property type="entry name" value="UPF0758"/>
    <property type="match status" value="1"/>
</dbReference>
<feature type="chain" id="PRO_0000190692" description="UPF0758 protein CPE2144">
    <location>
        <begin position="1"/>
        <end position="227"/>
    </location>
</feature>
<feature type="domain" description="MPN" evidence="1">
    <location>
        <begin position="105"/>
        <end position="227"/>
    </location>
</feature>
<feature type="short sequence motif" description="JAMM motif" evidence="1">
    <location>
        <begin position="176"/>
        <end position="189"/>
    </location>
</feature>
<feature type="binding site" evidence="1">
    <location>
        <position position="176"/>
    </location>
    <ligand>
        <name>Zn(2+)</name>
        <dbReference type="ChEBI" id="CHEBI:29105"/>
        <note>catalytic</note>
    </ligand>
</feature>
<feature type="binding site" evidence="1">
    <location>
        <position position="178"/>
    </location>
    <ligand>
        <name>Zn(2+)</name>
        <dbReference type="ChEBI" id="CHEBI:29105"/>
        <note>catalytic</note>
    </ligand>
</feature>
<feature type="binding site" evidence="1">
    <location>
        <position position="189"/>
    </location>
    <ligand>
        <name>Zn(2+)</name>
        <dbReference type="ChEBI" id="CHEBI:29105"/>
        <note>catalytic</note>
    </ligand>
</feature>
<protein>
    <recommendedName>
        <fullName>UPF0758 protein CPE2144</fullName>
    </recommendedName>
</protein>
<accession>Q8XIH5</accession>